<proteinExistence type="evidence at protein level"/>
<gene>
    <name evidence="2" type="primary">mosB</name>
    <name type="ordered locus">Avin_43210</name>
</gene>
<evidence type="ECO:0000269" key="1">
    <source>
    </source>
</evidence>
<evidence type="ECO:0000303" key="2">
    <source>
    </source>
</evidence>
<evidence type="ECO:0000305" key="3"/>
<evidence type="ECO:0007829" key="4">
    <source>
        <dbReference type="PDB" id="4NDO"/>
    </source>
</evidence>
<evidence type="ECO:0007829" key="5">
    <source>
        <dbReference type="PDB" id="5O5W"/>
    </source>
</evidence>
<protein>
    <recommendedName>
        <fullName>Molybdenum storage protein subunit beta</fullName>
        <shortName>Mo storage protein subunit beta</shortName>
        <shortName>MoSto subunit beta</shortName>
    </recommendedName>
</protein>
<feature type="initiator methionine" description="Removed" evidence="1">
    <location>
        <position position="1"/>
    </location>
</feature>
<feature type="chain" id="PRO_0000143932" description="Molybdenum storage protein subunit beta">
    <location>
        <begin position="2"/>
        <end position="270"/>
    </location>
</feature>
<feature type="helix" evidence="4">
    <location>
        <begin position="5"/>
        <end position="14"/>
    </location>
</feature>
<feature type="helix" evidence="4">
    <location>
        <begin position="20"/>
        <end position="27"/>
    </location>
</feature>
<feature type="strand" evidence="4">
    <location>
        <begin position="38"/>
        <end position="43"/>
    </location>
</feature>
<feature type="turn" evidence="4">
    <location>
        <begin position="45"/>
        <end position="48"/>
    </location>
</feature>
<feature type="helix" evidence="4">
    <location>
        <begin position="49"/>
        <end position="52"/>
    </location>
</feature>
<feature type="helix" evidence="4">
    <location>
        <begin position="53"/>
        <end position="66"/>
    </location>
</feature>
<feature type="turn" evidence="4">
    <location>
        <begin position="67"/>
        <end position="69"/>
    </location>
</feature>
<feature type="strand" evidence="4">
    <location>
        <begin position="71"/>
        <end position="76"/>
    </location>
</feature>
<feature type="helix" evidence="4">
    <location>
        <begin position="80"/>
        <end position="91"/>
    </location>
</feature>
<feature type="helix" evidence="4">
    <location>
        <begin position="96"/>
        <end position="118"/>
    </location>
</feature>
<feature type="helix" evidence="4">
    <location>
        <begin position="119"/>
        <end position="121"/>
    </location>
</feature>
<feature type="helix" evidence="4">
    <location>
        <begin position="129"/>
        <end position="131"/>
    </location>
</feature>
<feature type="helix" evidence="4">
    <location>
        <begin position="135"/>
        <end position="137"/>
    </location>
</feature>
<feature type="turn" evidence="5">
    <location>
        <begin position="139"/>
        <end position="141"/>
    </location>
</feature>
<feature type="strand" evidence="4">
    <location>
        <begin position="143"/>
        <end position="147"/>
    </location>
</feature>
<feature type="helix" evidence="4">
    <location>
        <begin position="153"/>
        <end position="155"/>
    </location>
</feature>
<feature type="strand" evidence="4">
    <location>
        <begin position="160"/>
        <end position="164"/>
    </location>
</feature>
<feature type="helix" evidence="4">
    <location>
        <begin position="169"/>
        <end position="180"/>
    </location>
</feature>
<feature type="strand" evidence="4">
    <location>
        <begin position="183"/>
        <end position="197"/>
    </location>
</feature>
<feature type="turn" evidence="4">
    <location>
        <begin position="199"/>
        <end position="201"/>
    </location>
</feature>
<feature type="strand" evidence="4">
    <location>
        <begin position="207"/>
        <end position="212"/>
    </location>
</feature>
<feature type="helix" evidence="4">
    <location>
        <begin position="213"/>
        <end position="218"/>
    </location>
</feature>
<feature type="strand" evidence="4">
    <location>
        <begin position="224"/>
        <end position="226"/>
    </location>
</feature>
<feature type="helix" evidence="4">
    <location>
        <begin position="228"/>
        <end position="236"/>
    </location>
</feature>
<feature type="strand" evidence="4">
    <location>
        <begin position="242"/>
        <end position="247"/>
    </location>
</feature>
<feature type="helix" evidence="4">
    <location>
        <begin position="253"/>
        <end position="258"/>
    </location>
</feature>
<feature type="strand" evidence="4">
    <location>
        <begin position="264"/>
        <end position="268"/>
    </location>
</feature>
<sequence>MANSTAELEELLMQRSLTDPQLQAAAAAAADFRILPDATVIKIGGQSVIDRGRAAVYPLVDEIVAARKNHKLLIGTGAGTRARHLYSIAAGLGLPAGVLAQLGSSVADQNAAMLGQLLAKHGIPVVGGAGLSAVPLSLAEVNAVVFSGMPPYKLWMRPAAEGVIPPYRTDAGCFLLAEQFGCKQMIFVKDEDGLYTANPKTSKDATFIPRISVDEMKAKGLHDSILEFPVLDLLQSAQHVREVQVVNGLVPGNLTRALAGEHVGTIITAS</sequence>
<keyword id="KW-0002">3D-structure</keyword>
<keyword id="KW-0963">Cytoplasm</keyword>
<keyword id="KW-0903">Direct protein sequencing</keyword>
<keyword id="KW-0479">Metal-binding</keyword>
<keyword id="KW-0500">Molybdenum</keyword>
<keyword id="KW-0758">Storage protein</keyword>
<name>MOSB_AZOVD</name>
<organism>
    <name type="scientific">Azotobacter vinelandii (strain DJ / ATCC BAA-1303)</name>
    <dbReference type="NCBI Taxonomy" id="322710"/>
    <lineage>
        <taxon>Bacteria</taxon>
        <taxon>Pseudomonadati</taxon>
        <taxon>Pseudomonadota</taxon>
        <taxon>Gammaproteobacteria</taxon>
        <taxon>Pseudomonadales</taxon>
        <taxon>Pseudomonadaceae</taxon>
        <taxon>Azotobacter</taxon>
    </lineage>
</organism>
<accession>P84253</accession>
<accession>C1DFP6</accession>
<accession>Q4IT84</accession>
<comment type="function">
    <text evidence="1">Intracellular storage of molybdenum. Binds polyoxomolybdates. Can bind at least 90 molybdenum atoms per protein molecule.</text>
</comment>
<comment type="biophysicochemical properties">
    <phDependence>
        <text evidence="1">Optimum pH is 6.5 to 7.0. Above pH 7.1 molybdenum is released.</text>
    </phDependence>
</comment>
<comment type="subunit">
    <text evidence="1">Octamer consisting of 4 alpha and 4 beta chains.</text>
</comment>
<comment type="subcellular location">
    <subcellularLocation>
        <location evidence="1">Cytoplasm</location>
    </subcellularLocation>
</comment>
<comment type="induction">
    <text evidence="1">Requires molybdenum.</text>
</comment>
<comment type="mass spectrometry"/>
<comment type="similarity">
    <text evidence="3">Belongs to the UMP kinase family. Highly divergent.</text>
</comment>
<comment type="sequence caution" evidence="3">
    <conflict type="erroneous initiation">
        <sequence resource="EMBL-CDS" id="ACO80442"/>
    </conflict>
</comment>
<reference key="1">
    <citation type="journal article" date="2009" name="J. Bacteriol.">
        <title>Genome sequence of Azotobacter vinelandii, an obligate aerobe specialized to support diverse anaerobic metabolic processes.</title>
        <authorList>
            <person name="Setubal J.C."/>
            <person name="Dos Santos P."/>
            <person name="Goldman B.S."/>
            <person name="Ertesvaag H."/>
            <person name="Espin G."/>
            <person name="Rubio L.M."/>
            <person name="Valla S."/>
            <person name="Almeida N.F."/>
            <person name="Balasubramanian D."/>
            <person name="Cromes L."/>
            <person name="Curatti L."/>
            <person name="Du Z."/>
            <person name="Godsy E."/>
            <person name="Goodner B."/>
            <person name="Hellner-Burris K."/>
            <person name="Hernandez J.A."/>
            <person name="Houmiel K."/>
            <person name="Imperial J."/>
            <person name="Kennedy C."/>
            <person name="Larson T.J."/>
            <person name="Latreille P."/>
            <person name="Ligon L.S."/>
            <person name="Lu J."/>
            <person name="Maerk M."/>
            <person name="Miller N.M."/>
            <person name="Norton S."/>
            <person name="O'Carroll I.P."/>
            <person name="Paulsen I."/>
            <person name="Raulfs E.C."/>
            <person name="Roemer R."/>
            <person name="Rosser J."/>
            <person name="Segura D."/>
            <person name="Slater S."/>
            <person name="Stricklin S.L."/>
            <person name="Studholme D.J."/>
            <person name="Sun J."/>
            <person name="Viana C.J."/>
            <person name="Wallin E."/>
            <person name="Wang B."/>
            <person name="Wheeler C."/>
            <person name="Zhu H."/>
            <person name="Dean D.R."/>
            <person name="Dixon R."/>
            <person name="Wood D."/>
        </authorList>
    </citation>
    <scope>NUCLEOTIDE SEQUENCE [LARGE SCALE GENOMIC DNA]</scope>
    <source>
        <strain>DJ / ATCC BAA-1303</strain>
    </source>
</reference>
<reference evidence="3" key="2">
    <citation type="journal article" date="2005" name="ChemBioChem">
        <title>A new type of metalloprotein: the Mo storage protein from Azotobacter vinelandii contains a polynuclear molybdenum-oxide cluster.</title>
        <authorList>
            <person name="Fenske D."/>
            <person name="Gnida M."/>
            <person name="Schneider K."/>
            <person name="Meyer-Klaucke W."/>
            <person name="Schemberg J."/>
            <person name="Henschel V."/>
            <person name="Meyer A.-K."/>
            <person name="Knochel A."/>
            <person name="Muller A."/>
        </authorList>
    </citation>
    <scope>PROTEIN SEQUENCE OF 2-36</scope>
    <scope>IDENTIFICATION</scope>
    <scope>FUNCTION</scope>
    <scope>BIOPHYSICOCHEMICAL PROPERTIES</scope>
    <scope>SUBUNIT</scope>
    <scope>SUBCELLULAR LOCATION</scope>
    <scope>INDUCTION</scope>
    <scope>MOLYBDENUM-BINDING</scope>
    <scope>MASS SPECTROMETRY</scope>
    <source>
        <strain>ATCC 13705 / OP1 / DSM 366 / NCIB 11614 / LMG 3878 / UW</strain>
    </source>
</reference>
<dbReference type="EMBL" id="CP001157">
    <property type="protein sequence ID" value="ACO80442.1"/>
    <property type="status" value="ALT_INIT"/>
    <property type="molecule type" value="Genomic_DNA"/>
</dbReference>
<dbReference type="RefSeq" id="WP_041807406.1">
    <property type="nucleotide sequence ID" value="NC_012560.1"/>
</dbReference>
<dbReference type="PDB" id="2OGX">
    <property type="method" value="X-ray"/>
    <property type="resolution" value="1.60 A"/>
    <property type="chains" value="B=1-270"/>
</dbReference>
<dbReference type="PDB" id="4F6T">
    <property type="method" value="X-ray"/>
    <property type="resolution" value="1.60 A"/>
    <property type="chains" value="B=3-270"/>
</dbReference>
<dbReference type="PDB" id="4NDO">
    <property type="method" value="X-ray"/>
    <property type="resolution" value="1.35 A"/>
    <property type="chains" value="B=1-270"/>
</dbReference>
<dbReference type="PDB" id="4NDP">
    <property type="method" value="X-ray"/>
    <property type="resolution" value="1.60 A"/>
    <property type="chains" value="B=1-270"/>
</dbReference>
<dbReference type="PDB" id="4NDQ">
    <property type="method" value="X-ray"/>
    <property type="resolution" value="1.75 A"/>
    <property type="chains" value="B=1-270"/>
</dbReference>
<dbReference type="PDB" id="4NDR">
    <property type="method" value="X-ray"/>
    <property type="resolution" value="2.00 A"/>
    <property type="chains" value="B=1-270"/>
</dbReference>
<dbReference type="PDB" id="5O5W">
    <property type="method" value="X-ray"/>
    <property type="resolution" value="1.70 A"/>
    <property type="chains" value="B=1-270"/>
</dbReference>
<dbReference type="PDB" id="6GU5">
    <property type="method" value="X-ray"/>
    <property type="resolution" value="1.90 A"/>
    <property type="chains" value="B=2-270"/>
</dbReference>
<dbReference type="PDB" id="6GUJ">
    <property type="method" value="X-ray"/>
    <property type="resolution" value="2.10 A"/>
    <property type="chains" value="B=2-270"/>
</dbReference>
<dbReference type="PDB" id="6GWB">
    <property type="method" value="X-ray"/>
    <property type="resolution" value="1.90 A"/>
    <property type="chains" value="B=2-270"/>
</dbReference>
<dbReference type="PDB" id="6GWV">
    <property type="method" value="X-ray"/>
    <property type="resolution" value="2.80 A"/>
    <property type="chains" value="B/C/E/H/I/K/N/O/Q=2-270"/>
</dbReference>
<dbReference type="PDB" id="6GX4">
    <property type="method" value="X-ray"/>
    <property type="resolution" value="1.90 A"/>
    <property type="chains" value="B=2-270"/>
</dbReference>
<dbReference type="PDB" id="6H6W">
    <property type="method" value="X-ray"/>
    <property type="resolution" value="1.90 A"/>
    <property type="chains" value="B=2-270"/>
</dbReference>
<dbReference type="PDB" id="6H73">
    <property type="method" value="X-ray"/>
    <property type="resolution" value="2.30 A"/>
    <property type="chains" value="B=2-270"/>
</dbReference>
<dbReference type="PDB" id="6H74">
    <property type="method" value="X-ray"/>
    <property type="resolution" value="1.80 A"/>
    <property type="chains" value="B=2-270"/>
</dbReference>
<dbReference type="PDB" id="6H8B">
    <property type="method" value="X-ray"/>
    <property type="resolution" value="1.90 A"/>
    <property type="chains" value="B=2-270"/>
</dbReference>
<dbReference type="PDB" id="6H8H">
    <property type="method" value="X-ray"/>
    <property type="resolution" value="1.90 A"/>
    <property type="chains" value="B=2-270"/>
</dbReference>
<dbReference type="PDB" id="6RIS">
    <property type="method" value="X-ray"/>
    <property type="resolution" value="2.10 A"/>
    <property type="chains" value="B=2-270"/>
</dbReference>
<dbReference type="PDB" id="6RJ4">
    <property type="method" value="X-ray"/>
    <property type="resolution" value="1.90 A"/>
    <property type="chains" value="B/D/F=2-270"/>
</dbReference>
<dbReference type="PDB" id="6RKD">
    <property type="method" value="EM"/>
    <property type="resolution" value="3.20 A"/>
    <property type="chains" value="B/D/F/H/J/L=1-270"/>
</dbReference>
<dbReference type="PDB" id="6RKE">
    <property type="method" value="X-ray"/>
    <property type="resolution" value="1.70 A"/>
    <property type="chains" value="B/D/F/H/J/L=2-270"/>
</dbReference>
<dbReference type="PDB" id="6YT3">
    <property type="method" value="X-ray"/>
    <property type="resolution" value="2.85 A"/>
    <property type="chains" value="B=9-270"/>
</dbReference>
<dbReference type="PDB" id="7Z5J">
    <property type="method" value="EM"/>
    <property type="resolution" value="2.58 A"/>
    <property type="chains" value="B/D/F/H/J/L=2-270"/>
</dbReference>
<dbReference type="PDB" id="7ZQQ">
    <property type="method" value="X-ray"/>
    <property type="resolution" value="1.75 A"/>
    <property type="chains" value="B=2-270"/>
</dbReference>
<dbReference type="PDB" id="7ZR4">
    <property type="method" value="X-ray"/>
    <property type="resolution" value="1.70 A"/>
    <property type="chains" value="B=2-270"/>
</dbReference>
<dbReference type="PDB" id="7ZSE">
    <property type="method" value="X-ray"/>
    <property type="resolution" value="1.40 A"/>
    <property type="chains" value="B=2-270"/>
</dbReference>
<dbReference type="PDBsum" id="2OGX"/>
<dbReference type="PDBsum" id="4F6T"/>
<dbReference type="PDBsum" id="4NDO"/>
<dbReference type="PDBsum" id="4NDP"/>
<dbReference type="PDBsum" id="4NDQ"/>
<dbReference type="PDBsum" id="4NDR"/>
<dbReference type="PDBsum" id="5O5W"/>
<dbReference type="PDBsum" id="6GU5"/>
<dbReference type="PDBsum" id="6GUJ"/>
<dbReference type="PDBsum" id="6GWB"/>
<dbReference type="PDBsum" id="6GWV"/>
<dbReference type="PDBsum" id="6GX4"/>
<dbReference type="PDBsum" id="6H6W"/>
<dbReference type="PDBsum" id="6H73"/>
<dbReference type="PDBsum" id="6H74"/>
<dbReference type="PDBsum" id="6H8B"/>
<dbReference type="PDBsum" id="6H8H"/>
<dbReference type="PDBsum" id="6RIS"/>
<dbReference type="PDBsum" id="6RJ4"/>
<dbReference type="PDBsum" id="6RKD"/>
<dbReference type="PDBsum" id="6RKE"/>
<dbReference type="PDBsum" id="6YT3"/>
<dbReference type="PDBsum" id="7Z5J"/>
<dbReference type="PDBsum" id="7ZQQ"/>
<dbReference type="PDBsum" id="7ZR4"/>
<dbReference type="PDBsum" id="7ZSE"/>
<dbReference type="EMDB" id="EMD-14522"/>
<dbReference type="EMDB" id="EMD-4907"/>
<dbReference type="SMR" id="P84253"/>
<dbReference type="STRING" id="322710.Avin_43210"/>
<dbReference type="EnsemblBacteria" id="ACO80442">
    <property type="protein sequence ID" value="ACO80442"/>
    <property type="gene ID" value="Avin_43210"/>
</dbReference>
<dbReference type="GeneID" id="88187233"/>
<dbReference type="KEGG" id="avn:Avin_43210"/>
<dbReference type="eggNOG" id="COG0528">
    <property type="taxonomic scope" value="Bacteria"/>
</dbReference>
<dbReference type="HOGENOM" id="CLU_1008069_0_0_6"/>
<dbReference type="OrthoDB" id="581602at2"/>
<dbReference type="EvolutionaryTrace" id="P84253"/>
<dbReference type="Proteomes" id="UP000002424">
    <property type="component" value="Chromosome"/>
</dbReference>
<dbReference type="GO" id="GO:0005737">
    <property type="term" value="C:cytoplasm"/>
    <property type="evidence" value="ECO:0000314"/>
    <property type="project" value="UniProtKB"/>
</dbReference>
<dbReference type="GO" id="GO:0030151">
    <property type="term" value="F:molybdenum ion binding"/>
    <property type="evidence" value="ECO:0000314"/>
    <property type="project" value="UniProtKB"/>
</dbReference>
<dbReference type="GO" id="GO:0045735">
    <property type="term" value="F:nutrient reservoir activity"/>
    <property type="evidence" value="ECO:0007669"/>
    <property type="project" value="UniProtKB-KW"/>
</dbReference>
<dbReference type="CDD" id="cd04255">
    <property type="entry name" value="AAK_UMPK-MosAB"/>
    <property type="match status" value="1"/>
</dbReference>
<dbReference type="FunFam" id="3.40.1160.10:FF:000061">
    <property type="entry name" value="Molybdenum storage protein subunit beta"/>
    <property type="match status" value="1"/>
</dbReference>
<dbReference type="Gene3D" id="3.40.1160.10">
    <property type="entry name" value="Acetylglutamate kinase-like"/>
    <property type="match status" value="1"/>
</dbReference>
<dbReference type="InterPro" id="IPR036393">
    <property type="entry name" value="AceGlu_kinase-like_sf"/>
</dbReference>
<dbReference type="InterPro" id="IPR001048">
    <property type="entry name" value="Asp/Glu/Uridylate_kinase"/>
</dbReference>
<dbReference type="InterPro" id="IPR030669">
    <property type="entry name" value="MoSto_subunit_alpha/beta"/>
</dbReference>
<dbReference type="Pfam" id="PF00696">
    <property type="entry name" value="AA_kinase"/>
    <property type="match status" value="1"/>
</dbReference>
<dbReference type="PIRSF" id="PIRSF039097">
    <property type="entry name" value="MoSto_subunit"/>
    <property type="match status" value="1"/>
</dbReference>
<dbReference type="SUPFAM" id="SSF53633">
    <property type="entry name" value="Carbamate kinase-like"/>
    <property type="match status" value="1"/>
</dbReference>